<sequence length="435" mass="51173">MSKFDLTAKNCQYLDRHLTFPLLEFLLQKNIYDQTSLLKFILETVSKTNMVDYTMDIRERLNMGNELPEELTKRRSNVLVKLKELQTEVAPLMKCMEELKNPDTMKDSKSIVHALQQEFDFKYDIIRSAQKLAKYLYECGNYRDSISYLYICLLVMEPTDKNYLNVLWGKLAAEILTLNWPTALEDLTRLRDFIDNHNFSPIEVLQQRTWLIHWSVLVFFNHAKGRDLIIEMFLYKQLYLNAIQTMCPHILRYLATAVIINRGRRNALKDLIKIIQQESYTYKDPITEFLECLYVNFDFEGARMKLHECQTVIINDFFIIGCLQEFIENARLMIFETFCRIHQCITIGMLADKLNMEPDEAECWIVNLIRNARLDAKIDSKLGHVVMGTQPLSPYQQLVEKIDSLSVRSEALTVLVERKQKAKTQESGEGNWKYY</sequence>
<name>EIF3E_CULQU</name>
<dbReference type="EMBL" id="DS231873">
    <property type="protein sequence ID" value="EDS41579.1"/>
    <property type="molecule type" value="Genomic_DNA"/>
</dbReference>
<dbReference type="SMR" id="B0WAM5"/>
<dbReference type="FunCoup" id="B0WAM5">
    <property type="interactions" value="2503"/>
</dbReference>
<dbReference type="STRING" id="7176.B0WAM5"/>
<dbReference type="EnsemblMetazoa" id="CPIJ003936-RA">
    <property type="protein sequence ID" value="CPIJ003936-PA"/>
    <property type="gene ID" value="CPIJ003936"/>
</dbReference>
<dbReference type="EnsemblMetazoa" id="CQUJHB002753.R4116">
    <property type="protein sequence ID" value="CQUJHB002753.P4116"/>
    <property type="gene ID" value="CQUJHB002753"/>
</dbReference>
<dbReference type="EnsemblMetazoa" id="XM_001845707.2">
    <property type="protein sequence ID" value="XP_001845759.1"/>
    <property type="gene ID" value="LOC6035610"/>
</dbReference>
<dbReference type="GeneID" id="6035610"/>
<dbReference type="KEGG" id="cqu:CpipJ_CPIJ003936"/>
<dbReference type="CTD" id="3646"/>
<dbReference type="VEuPathDB" id="VectorBase:CPIJ003936"/>
<dbReference type="VEuPathDB" id="VectorBase:CQUJHB002753"/>
<dbReference type="eggNOG" id="KOG2758">
    <property type="taxonomic scope" value="Eukaryota"/>
</dbReference>
<dbReference type="HOGENOM" id="CLU_031132_0_1_1"/>
<dbReference type="InParanoid" id="B0WAM5"/>
<dbReference type="OMA" id="NCPWILR"/>
<dbReference type="OrthoDB" id="417252at2759"/>
<dbReference type="PhylomeDB" id="B0WAM5"/>
<dbReference type="Proteomes" id="UP000002320">
    <property type="component" value="Unassembled WGS sequence"/>
</dbReference>
<dbReference type="GO" id="GO:0016282">
    <property type="term" value="C:eukaryotic 43S preinitiation complex"/>
    <property type="evidence" value="ECO:0007669"/>
    <property type="project" value="UniProtKB-UniRule"/>
</dbReference>
<dbReference type="GO" id="GO:0033290">
    <property type="term" value="C:eukaryotic 48S preinitiation complex"/>
    <property type="evidence" value="ECO:0007669"/>
    <property type="project" value="UniProtKB-UniRule"/>
</dbReference>
<dbReference type="GO" id="GO:0071540">
    <property type="term" value="C:eukaryotic translation initiation factor 3 complex, eIF3e"/>
    <property type="evidence" value="ECO:0007669"/>
    <property type="project" value="UniProtKB-UniRule"/>
</dbReference>
<dbReference type="GO" id="GO:0003743">
    <property type="term" value="F:translation initiation factor activity"/>
    <property type="evidence" value="ECO:0007669"/>
    <property type="project" value="UniProtKB-UniRule"/>
</dbReference>
<dbReference type="GO" id="GO:0001732">
    <property type="term" value="P:formation of cytoplasmic translation initiation complex"/>
    <property type="evidence" value="ECO:0007669"/>
    <property type="project" value="UniProtKB-UniRule"/>
</dbReference>
<dbReference type="CDD" id="cd21378">
    <property type="entry name" value="eIF3E"/>
    <property type="match status" value="1"/>
</dbReference>
<dbReference type="HAMAP" id="MF_03004">
    <property type="entry name" value="eIF3e"/>
    <property type="match status" value="1"/>
</dbReference>
<dbReference type="InterPro" id="IPR016650">
    <property type="entry name" value="eIF3e"/>
</dbReference>
<dbReference type="InterPro" id="IPR019010">
    <property type="entry name" value="eIF3e_N"/>
</dbReference>
<dbReference type="InterPro" id="IPR000717">
    <property type="entry name" value="PCI_dom"/>
</dbReference>
<dbReference type="InterPro" id="IPR036390">
    <property type="entry name" value="WH_DNA-bd_sf"/>
</dbReference>
<dbReference type="PANTHER" id="PTHR10317">
    <property type="entry name" value="EUKARYOTIC TRANSLATION INITIATION FACTOR 3 SUBUNIT E"/>
    <property type="match status" value="1"/>
</dbReference>
<dbReference type="Pfam" id="PF09440">
    <property type="entry name" value="eIF3_N"/>
    <property type="match status" value="1"/>
</dbReference>
<dbReference type="Pfam" id="PF01399">
    <property type="entry name" value="PCI"/>
    <property type="match status" value="1"/>
</dbReference>
<dbReference type="PIRSF" id="PIRSF016255">
    <property type="entry name" value="eIF3e_su6"/>
    <property type="match status" value="1"/>
</dbReference>
<dbReference type="SMART" id="SM01186">
    <property type="entry name" value="eIF3_N"/>
    <property type="match status" value="1"/>
</dbReference>
<dbReference type="SMART" id="SM00088">
    <property type="entry name" value="PINT"/>
    <property type="match status" value="1"/>
</dbReference>
<dbReference type="SUPFAM" id="SSF46785">
    <property type="entry name" value="Winged helix' DNA-binding domain"/>
    <property type="match status" value="1"/>
</dbReference>
<dbReference type="PROSITE" id="PS50250">
    <property type="entry name" value="PCI"/>
    <property type="match status" value="1"/>
</dbReference>
<keyword id="KW-0963">Cytoplasm</keyword>
<keyword id="KW-0396">Initiation factor</keyword>
<keyword id="KW-0648">Protein biosynthesis</keyword>
<keyword id="KW-1185">Reference proteome</keyword>
<organism>
    <name type="scientific">Culex quinquefasciatus</name>
    <name type="common">Southern house mosquito</name>
    <name type="synonym">Culex pungens</name>
    <dbReference type="NCBI Taxonomy" id="7176"/>
    <lineage>
        <taxon>Eukaryota</taxon>
        <taxon>Metazoa</taxon>
        <taxon>Ecdysozoa</taxon>
        <taxon>Arthropoda</taxon>
        <taxon>Hexapoda</taxon>
        <taxon>Insecta</taxon>
        <taxon>Pterygota</taxon>
        <taxon>Neoptera</taxon>
        <taxon>Endopterygota</taxon>
        <taxon>Diptera</taxon>
        <taxon>Nematocera</taxon>
        <taxon>Culicoidea</taxon>
        <taxon>Culicidae</taxon>
        <taxon>Culicinae</taxon>
        <taxon>Culicini</taxon>
        <taxon>Culex</taxon>
        <taxon>Culex</taxon>
    </lineage>
</organism>
<comment type="function">
    <text evidence="1">Component of the eukaryotic translation initiation factor 3 (eIF-3) complex, which is involved in protein synthesis of a specialized repertoire of mRNAs and, together with other initiation factors, stimulates binding of mRNA and methionyl-tRNAi to the 40S ribosome. The eIF-3 complex specifically targets and initiates translation of a subset of mRNAs involved in cell proliferation.</text>
</comment>
<comment type="subunit">
    <text evidence="1">Component of the eukaryotic translation initiation factor 3 (eIF-3) complex.</text>
</comment>
<comment type="subcellular location">
    <subcellularLocation>
        <location evidence="1">Cytoplasm</location>
    </subcellularLocation>
</comment>
<comment type="similarity">
    <text evidence="1">Belongs to the eIF-3 subunit E family.</text>
</comment>
<gene>
    <name type="primary">eIF3-S6</name>
    <name type="ORF">CPIJ003936</name>
</gene>
<accession>B0WAM5</accession>
<evidence type="ECO:0000255" key="1">
    <source>
        <dbReference type="HAMAP-Rule" id="MF_03004"/>
    </source>
</evidence>
<evidence type="ECO:0000255" key="2">
    <source>
        <dbReference type="PROSITE-ProRule" id="PRU01185"/>
    </source>
</evidence>
<protein>
    <recommendedName>
        <fullName evidence="1">Eukaryotic translation initiation factor 3 subunit E</fullName>
        <shortName evidence="1">eIF3e</shortName>
    </recommendedName>
    <alternativeName>
        <fullName evidence="1">Eukaryotic translation initiation factor 3 subunit 6</fullName>
    </alternativeName>
</protein>
<reference key="1">
    <citation type="submission" date="2007-03" db="EMBL/GenBank/DDBJ databases">
        <title>Annotation of Culex pipiens quinquefasciatus.</title>
        <authorList>
            <consortium name="The Broad Institute Genome Sequencing Platform"/>
            <person name="Atkinson P.W."/>
            <person name="Hemingway J."/>
            <person name="Christensen B.M."/>
            <person name="Higgs S."/>
            <person name="Kodira C.D."/>
            <person name="Hannick L.I."/>
            <person name="Megy K."/>
            <person name="O'Leary S.B."/>
            <person name="Pearson M."/>
            <person name="Haas B.J."/>
            <person name="Mauceli E."/>
            <person name="Wortman J.R."/>
            <person name="Lee N.H."/>
            <person name="Guigo R."/>
            <person name="Stanke M."/>
            <person name="Alvarado L."/>
            <person name="Amedeo P."/>
            <person name="Antoine C.H."/>
            <person name="Arensburger P."/>
            <person name="Bidwell S.L."/>
            <person name="Crawford M."/>
            <person name="Camaro F."/>
            <person name="Devon K."/>
            <person name="Engels R."/>
            <person name="Hammond M."/>
            <person name="Howarth C."/>
            <person name="Koehrsen M."/>
            <person name="Lawson D."/>
            <person name="Montgomery P."/>
            <person name="Nene V."/>
            <person name="Nusbaum C."/>
            <person name="Puiu D."/>
            <person name="Romero-Severson J."/>
            <person name="Severson D.W."/>
            <person name="Shumway M."/>
            <person name="Sisk P."/>
            <person name="Stolte C."/>
            <person name="Zeng Q."/>
            <person name="Eisenstadt E."/>
            <person name="Fraser-Liggett C.M."/>
            <person name="Strausberg R."/>
            <person name="Galagan J."/>
            <person name="Birren B."/>
            <person name="Collins F.H."/>
        </authorList>
    </citation>
    <scope>NUCLEOTIDE SEQUENCE [LARGE SCALE GENOMIC DNA]</scope>
    <source>
        <strain>JHB</strain>
    </source>
</reference>
<feature type="chain" id="PRO_0000365962" description="Eukaryotic translation initiation factor 3 subunit E">
    <location>
        <begin position="1"/>
        <end position="435"/>
    </location>
</feature>
<feature type="domain" description="PCI" evidence="2">
    <location>
        <begin position="219"/>
        <end position="392"/>
    </location>
</feature>
<proteinExistence type="inferred from homology"/>